<reference key="1">
    <citation type="journal article" date="2007" name="ISME J.">
        <title>Population level functional diversity in a microbial community revealed by comparative genomic and metagenomic analyses.</title>
        <authorList>
            <person name="Bhaya D."/>
            <person name="Grossman A.R."/>
            <person name="Steunou A.-S."/>
            <person name="Khuri N."/>
            <person name="Cohan F.M."/>
            <person name="Hamamura N."/>
            <person name="Melendrez M.C."/>
            <person name="Bateson M.M."/>
            <person name="Ward D.M."/>
            <person name="Heidelberg J.F."/>
        </authorList>
    </citation>
    <scope>NUCLEOTIDE SEQUENCE [LARGE SCALE GENOMIC DNA]</scope>
    <source>
        <strain>JA-2-3B'a(2-13)</strain>
    </source>
</reference>
<feature type="chain" id="PRO_0000327176" description="Protoheme IX farnesyltransferase">
    <location>
        <begin position="1"/>
        <end position="330"/>
    </location>
</feature>
<feature type="transmembrane region" description="Helical" evidence="1">
    <location>
        <begin position="30"/>
        <end position="50"/>
    </location>
</feature>
<feature type="transmembrane region" description="Helical" evidence="1">
    <location>
        <begin position="58"/>
        <end position="78"/>
    </location>
</feature>
<feature type="transmembrane region" description="Helical" evidence="1">
    <location>
        <begin position="106"/>
        <end position="126"/>
    </location>
</feature>
<feature type="transmembrane region" description="Helical" evidence="1">
    <location>
        <begin position="127"/>
        <end position="147"/>
    </location>
</feature>
<feature type="transmembrane region" description="Helical" evidence="1">
    <location>
        <begin position="155"/>
        <end position="175"/>
    </location>
</feature>
<feature type="transmembrane region" description="Helical" evidence="1">
    <location>
        <begin position="182"/>
        <end position="202"/>
    </location>
</feature>
<feature type="transmembrane region" description="Helical" evidence="1">
    <location>
        <begin position="228"/>
        <end position="248"/>
    </location>
</feature>
<feature type="transmembrane region" description="Helical" evidence="1">
    <location>
        <begin position="249"/>
        <end position="269"/>
    </location>
</feature>
<feature type="transmembrane region" description="Helical" evidence="1">
    <location>
        <begin position="281"/>
        <end position="301"/>
    </location>
</feature>
<comment type="function">
    <text evidence="1">Converts heme B (protoheme IX) to heme O by substitution of the vinyl group on carbon 2 of heme B porphyrin ring with a hydroxyethyl farnesyl side group.</text>
</comment>
<comment type="catalytic activity">
    <reaction evidence="1">
        <text>heme b + (2E,6E)-farnesyl diphosphate + H2O = Fe(II)-heme o + diphosphate</text>
        <dbReference type="Rhea" id="RHEA:28070"/>
        <dbReference type="ChEBI" id="CHEBI:15377"/>
        <dbReference type="ChEBI" id="CHEBI:33019"/>
        <dbReference type="ChEBI" id="CHEBI:60344"/>
        <dbReference type="ChEBI" id="CHEBI:60530"/>
        <dbReference type="ChEBI" id="CHEBI:175763"/>
        <dbReference type="EC" id="2.5.1.141"/>
    </reaction>
</comment>
<comment type="pathway">
    <text evidence="1">Porphyrin-containing compound metabolism; heme O biosynthesis; heme O from protoheme: step 1/1.</text>
</comment>
<comment type="subcellular location">
    <subcellularLocation>
        <location evidence="1">Cell inner membrane</location>
        <topology evidence="1">Multi-pass membrane protein</topology>
    </subcellularLocation>
</comment>
<comment type="miscellaneous">
    <text evidence="1">Carbon 2 of the heme B porphyrin ring is defined according to the Fischer nomenclature.</text>
</comment>
<comment type="similarity">
    <text evidence="1">Belongs to the UbiA prenyltransferase family. Protoheme IX farnesyltransferase subfamily.</text>
</comment>
<evidence type="ECO:0000255" key="1">
    <source>
        <dbReference type="HAMAP-Rule" id="MF_00154"/>
    </source>
</evidence>
<dbReference type="EC" id="2.5.1.141" evidence="1"/>
<dbReference type="EMBL" id="CP000240">
    <property type="protein sequence ID" value="ABD01646.1"/>
    <property type="molecule type" value="Genomic_DNA"/>
</dbReference>
<dbReference type="RefSeq" id="WP_011432304.1">
    <property type="nucleotide sequence ID" value="NC_007776.1"/>
</dbReference>
<dbReference type="SMR" id="Q2JNL3"/>
<dbReference type="STRING" id="321332.CYB_0660"/>
<dbReference type="KEGG" id="cyb:CYB_0660"/>
<dbReference type="eggNOG" id="COG0109">
    <property type="taxonomic scope" value="Bacteria"/>
</dbReference>
<dbReference type="HOGENOM" id="CLU_029631_0_2_3"/>
<dbReference type="OrthoDB" id="9814417at2"/>
<dbReference type="UniPathway" id="UPA00834">
    <property type="reaction ID" value="UER00712"/>
</dbReference>
<dbReference type="Proteomes" id="UP000001938">
    <property type="component" value="Chromosome"/>
</dbReference>
<dbReference type="GO" id="GO:0005886">
    <property type="term" value="C:plasma membrane"/>
    <property type="evidence" value="ECO:0007669"/>
    <property type="project" value="UniProtKB-SubCell"/>
</dbReference>
<dbReference type="GO" id="GO:0008495">
    <property type="term" value="F:protoheme IX farnesyltransferase activity"/>
    <property type="evidence" value="ECO:0007669"/>
    <property type="project" value="UniProtKB-UniRule"/>
</dbReference>
<dbReference type="GO" id="GO:0048034">
    <property type="term" value="P:heme O biosynthetic process"/>
    <property type="evidence" value="ECO:0007669"/>
    <property type="project" value="UniProtKB-UniRule"/>
</dbReference>
<dbReference type="CDD" id="cd13957">
    <property type="entry name" value="PT_UbiA_Cox10"/>
    <property type="match status" value="1"/>
</dbReference>
<dbReference type="FunFam" id="1.10.357.140:FF:000001">
    <property type="entry name" value="Protoheme IX farnesyltransferase"/>
    <property type="match status" value="1"/>
</dbReference>
<dbReference type="Gene3D" id="1.10.357.140">
    <property type="entry name" value="UbiA prenyltransferase"/>
    <property type="match status" value="1"/>
</dbReference>
<dbReference type="HAMAP" id="MF_00154">
    <property type="entry name" value="CyoE_CtaB"/>
    <property type="match status" value="1"/>
</dbReference>
<dbReference type="InterPro" id="IPR006369">
    <property type="entry name" value="Protohaem_IX_farnesylTrfase"/>
</dbReference>
<dbReference type="InterPro" id="IPR000537">
    <property type="entry name" value="UbiA_prenyltransferase"/>
</dbReference>
<dbReference type="InterPro" id="IPR030470">
    <property type="entry name" value="UbiA_prenylTrfase_CS"/>
</dbReference>
<dbReference type="InterPro" id="IPR044878">
    <property type="entry name" value="UbiA_sf"/>
</dbReference>
<dbReference type="NCBIfam" id="TIGR01473">
    <property type="entry name" value="cyoE_ctaB"/>
    <property type="match status" value="1"/>
</dbReference>
<dbReference type="NCBIfam" id="NF003349">
    <property type="entry name" value="PRK04375.1-2"/>
    <property type="match status" value="1"/>
</dbReference>
<dbReference type="PANTHER" id="PTHR43448:SF7">
    <property type="entry name" value="4-HYDROXYBENZOATE SOLANESYLTRANSFERASE"/>
    <property type="match status" value="1"/>
</dbReference>
<dbReference type="PANTHER" id="PTHR43448">
    <property type="entry name" value="PROTOHEME IX FARNESYLTRANSFERASE, MITOCHONDRIAL"/>
    <property type="match status" value="1"/>
</dbReference>
<dbReference type="Pfam" id="PF01040">
    <property type="entry name" value="UbiA"/>
    <property type="match status" value="1"/>
</dbReference>
<dbReference type="PROSITE" id="PS00943">
    <property type="entry name" value="UBIA"/>
    <property type="match status" value="1"/>
</dbReference>
<protein>
    <recommendedName>
        <fullName evidence="1">Protoheme IX farnesyltransferase</fullName>
        <ecNumber evidence="1">2.5.1.141</ecNumber>
    </recommendedName>
    <alternativeName>
        <fullName evidence="1">Heme B farnesyltransferase</fullName>
    </alternativeName>
    <alternativeName>
        <fullName evidence="1">Heme O synthase</fullName>
    </alternativeName>
</protein>
<organism>
    <name type="scientific">Synechococcus sp. (strain JA-2-3B'a(2-13))</name>
    <name type="common">Cyanobacteria bacterium Yellowstone B-Prime</name>
    <dbReference type="NCBI Taxonomy" id="321332"/>
    <lineage>
        <taxon>Bacteria</taxon>
        <taxon>Bacillati</taxon>
        <taxon>Cyanobacteriota</taxon>
        <taxon>Cyanophyceae</taxon>
        <taxon>Synechococcales</taxon>
        <taxon>Synechococcaceae</taxon>
        <taxon>Synechococcus</taxon>
    </lineage>
</organism>
<gene>
    <name evidence="1" type="primary">ctaB</name>
    <name type="ordered locus">CYB_0660</name>
</gene>
<accession>Q2JNL3</accession>
<name>COXX_SYNJB</name>
<proteinExistence type="inferred from homology"/>
<sequence>MGGIPSEQSPCALGCERQALVQVLRSYSQLVKPKIIALLLMTTAGAMWMAGNTDPFRFFITLLGGGIAAAAANVINMVYDTDIDRMMERTRHRPLPSGRIRARDALIFSGILALAAFGLLAIFTNLLAAGLAMSGILVYVGVYTHWLKRSSTQNIVIGGAAGAIPPLVGWAATTGELSWAAWVMFAIIFLWTPPHFWALAILKREDYARAGVPMLPVVAGERITAAQILLYALLMVPVSLLLVYPLGMLGSFYLSAAALLGSLLVWKAVQLLQDPCDRDRAASLFTFANLYLLLLCGAMGLDRWSLTHILWSQATASLQGIYTTLIALAS</sequence>
<keyword id="KW-0997">Cell inner membrane</keyword>
<keyword id="KW-1003">Cell membrane</keyword>
<keyword id="KW-0350">Heme biosynthesis</keyword>
<keyword id="KW-0472">Membrane</keyword>
<keyword id="KW-1185">Reference proteome</keyword>
<keyword id="KW-0808">Transferase</keyword>
<keyword id="KW-0812">Transmembrane</keyword>
<keyword id="KW-1133">Transmembrane helix</keyword>